<proteinExistence type="inferred from homology"/>
<evidence type="ECO:0000255" key="1">
    <source>
        <dbReference type="HAMAP-Rule" id="MF_01155"/>
    </source>
</evidence>
<gene>
    <name evidence="1" type="primary">cbpM</name>
    <name type="ordered locus">STY1147</name>
    <name type="ordered locus">t1809</name>
</gene>
<accession>Q8XGQ8</accession>
<accession>Q7AN60</accession>
<sequence length="101" mass="11595">MANITVTFTITEFCLHTGVTEEELNEIVGLGVIEPYEDDNADWQFDDRAASVVQRALRLREELALDWPGIAVALTLLEENSRLREENRLLLQRLSRFISHP</sequence>
<organism>
    <name type="scientific">Salmonella typhi</name>
    <dbReference type="NCBI Taxonomy" id="90370"/>
    <lineage>
        <taxon>Bacteria</taxon>
        <taxon>Pseudomonadati</taxon>
        <taxon>Pseudomonadota</taxon>
        <taxon>Gammaproteobacteria</taxon>
        <taxon>Enterobacterales</taxon>
        <taxon>Enterobacteriaceae</taxon>
        <taxon>Salmonella</taxon>
    </lineage>
</organism>
<protein>
    <recommendedName>
        <fullName evidence="1">Chaperone modulatory protein CbpM</fullName>
    </recommendedName>
</protein>
<comment type="function">
    <text evidence="1">Interacts with CbpA and inhibits both the DnaJ-like co-chaperone activity and the DNA binding activity of CbpA. Together with CbpA, modulates the activity of the DnaK chaperone system. Does not inhibit the co-chaperone activity of DnaJ.</text>
</comment>
<comment type="similarity">
    <text evidence="1">Belongs to the CbpM family.</text>
</comment>
<dbReference type="EMBL" id="AE014613">
    <property type="protein sequence ID" value="AAO69431.1"/>
    <property type="molecule type" value="Genomic_DNA"/>
</dbReference>
<dbReference type="EMBL" id="AL513382">
    <property type="protein sequence ID" value="CAD08236.1"/>
    <property type="molecule type" value="Genomic_DNA"/>
</dbReference>
<dbReference type="RefSeq" id="NP_455606.1">
    <property type="nucleotide sequence ID" value="NC_003198.1"/>
</dbReference>
<dbReference type="RefSeq" id="WP_001284251.1">
    <property type="nucleotide sequence ID" value="NZ_WSUR01000018.1"/>
</dbReference>
<dbReference type="SMR" id="Q8XGQ8"/>
<dbReference type="STRING" id="220341.gene:17585115"/>
<dbReference type="KEGG" id="stt:t1809"/>
<dbReference type="KEGG" id="sty:STY1147"/>
<dbReference type="PATRIC" id="fig|220341.7.peg.1147"/>
<dbReference type="eggNOG" id="COG0789">
    <property type="taxonomic scope" value="Bacteria"/>
</dbReference>
<dbReference type="HOGENOM" id="CLU_144710_3_1_6"/>
<dbReference type="OMA" id="DWPGIAM"/>
<dbReference type="OrthoDB" id="5567704at2"/>
<dbReference type="Proteomes" id="UP000000541">
    <property type="component" value="Chromosome"/>
</dbReference>
<dbReference type="Proteomes" id="UP000002670">
    <property type="component" value="Chromosome"/>
</dbReference>
<dbReference type="Gene3D" id="1.10.1660.10">
    <property type="match status" value="1"/>
</dbReference>
<dbReference type="HAMAP" id="MF_01155">
    <property type="entry name" value="CbpM"/>
    <property type="match status" value="1"/>
</dbReference>
<dbReference type="InterPro" id="IPR022835">
    <property type="entry name" value="CbpM"/>
</dbReference>
<dbReference type="NCBIfam" id="NF007617">
    <property type="entry name" value="PRK10265.1"/>
    <property type="match status" value="1"/>
</dbReference>
<dbReference type="Pfam" id="PF13591">
    <property type="entry name" value="MerR_2"/>
    <property type="match status" value="1"/>
</dbReference>
<name>CBPM_SALTI</name>
<reference key="1">
    <citation type="journal article" date="2003" name="J. Bacteriol.">
        <title>Comparative genomics of Salmonella enterica serovar Typhi strains Ty2 and CT18.</title>
        <authorList>
            <person name="Deng W."/>
            <person name="Liou S.-R."/>
            <person name="Plunkett G. III"/>
            <person name="Mayhew G.F."/>
            <person name="Rose D.J."/>
            <person name="Burland V."/>
            <person name="Kodoyianni V."/>
            <person name="Schwartz D.C."/>
            <person name="Blattner F.R."/>
        </authorList>
    </citation>
    <scope>NUCLEOTIDE SEQUENCE [LARGE SCALE GENOMIC DNA]</scope>
    <source>
        <strain>ATCC 700931 / Ty2</strain>
    </source>
</reference>
<reference key="2">
    <citation type="journal article" date="2001" name="Nature">
        <title>Complete genome sequence of a multiple drug resistant Salmonella enterica serovar Typhi CT18.</title>
        <authorList>
            <person name="Parkhill J."/>
            <person name="Dougan G."/>
            <person name="James K.D."/>
            <person name="Thomson N.R."/>
            <person name="Pickard D."/>
            <person name="Wain J."/>
            <person name="Churcher C.M."/>
            <person name="Mungall K.L."/>
            <person name="Bentley S.D."/>
            <person name="Holden M.T.G."/>
            <person name="Sebaihia M."/>
            <person name="Baker S."/>
            <person name="Basham D."/>
            <person name="Brooks K."/>
            <person name="Chillingworth T."/>
            <person name="Connerton P."/>
            <person name="Cronin A."/>
            <person name="Davis P."/>
            <person name="Davies R.M."/>
            <person name="Dowd L."/>
            <person name="White N."/>
            <person name="Farrar J."/>
            <person name="Feltwell T."/>
            <person name="Hamlin N."/>
            <person name="Haque A."/>
            <person name="Hien T.T."/>
            <person name="Holroyd S."/>
            <person name="Jagels K."/>
            <person name="Krogh A."/>
            <person name="Larsen T.S."/>
            <person name="Leather S."/>
            <person name="Moule S."/>
            <person name="O'Gaora P."/>
            <person name="Parry C."/>
            <person name="Quail M.A."/>
            <person name="Rutherford K.M."/>
            <person name="Simmonds M."/>
            <person name="Skelton J."/>
            <person name="Stevens K."/>
            <person name="Whitehead S."/>
            <person name="Barrell B.G."/>
        </authorList>
    </citation>
    <scope>NUCLEOTIDE SEQUENCE [LARGE SCALE GENOMIC DNA]</scope>
    <source>
        <strain>CT18</strain>
    </source>
</reference>
<feature type="chain" id="PRO_0000211631" description="Chaperone modulatory protein CbpM">
    <location>
        <begin position="1"/>
        <end position="101"/>
    </location>
</feature>